<accession>B5YG34</accession>
<comment type="function">
    <text evidence="1">Binds 16S rRNA, required for the assembly of 30S particles and may also be responsible for determining the conformation of the 16S rRNA at the A site.</text>
</comment>
<comment type="cofactor">
    <cofactor evidence="1">
        <name>Zn(2+)</name>
        <dbReference type="ChEBI" id="CHEBI:29105"/>
    </cofactor>
    <text evidence="1">Binds 1 zinc ion per subunit.</text>
</comment>
<comment type="subunit">
    <text evidence="1">Part of the 30S ribosomal subunit. Contacts proteins S3 and S10.</text>
</comment>
<comment type="similarity">
    <text evidence="1">Belongs to the universal ribosomal protein uS14 family. Zinc-binding uS14 subfamily.</text>
</comment>
<name>RS14Z_THEYD</name>
<reference key="1">
    <citation type="submission" date="2008-08" db="EMBL/GenBank/DDBJ databases">
        <title>The complete genome sequence of Thermodesulfovibrio yellowstonii strain ATCC 51303 / DSM 11347 / YP87.</title>
        <authorList>
            <person name="Dodson R.J."/>
            <person name="Durkin A.S."/>
            <person name="Wu M."/>
            <person name="Eisen J."/>
            <person name="Sutton G."/>
        </authorList>
    </citation>
    <scope>NUCLEOTIDE SEQUENCE [LARGE SCALE GENOMIC DNA]</scope>
    <source>
        <strain>ATCC 51303 / DSM 11347 / YP87</strain>
    </source>
</reference>
<feature type="chain" id="PRO_1000166783" description="Small ribosomal subunit protein uS14">
    <location>
        <begin position="1"/>
        <end position="61"/>
    </location>
</feature>
<feature type="binding site" evidence="1">
    <location>
        <position position="24"/>
    </location>
    <ligand>
        <name>Zn(2+)</name>
        <dbReference type="ChEBI" id="CHEBI:29105"/>
    </ligand>
</feature>
<feature type="binding site" evidence="1">
    <location>
        <position position="27"/>
    </location>
    <ligand>
        <name>Zn(2+)</name>
        <dbReference type="ChEBI" id="CHEBI:29105"/>
    </ligand>
</feature>
<feature type="binding site" evidence="1">
    <location>
        <position position="40"/>
    </location>
    <ligand>
        <name>Zn(2+)</name>
        <dbReference type="ChEBI" id="CHEBI:29105"/>
    </ligand>
</feature>
<feature type="binding site" evidence="1">
    <location>
        <position position="43"/>
    </location>
    <ligand>
        <name>Zn(2+)</name>
        <dbReference type="ChEBI" id="CHEBI:29105"/>
    </ligand>
</feature>
<organism>
    <name type="scientific">Thermodesulfovibrio yellowstonii (strain ATCC 51303 / DSM 11347 / YP87)</name>
    <dbReference type="NCBI Taxonomy" id="289376"/>
    <lineage>
        <taxon>Bacteria</taxon>
        <taxon>Pseudomonadati</taxon>
        <taxon>Nitrospirota</taxon>
        <taxon>Thermodesulfovibrionia</taxon>
        <taxon>Thermodesulfovibrionales</taxon>
        <taxon>Thermodesulfovibrionaceae</taxon>
        <taxon>Thermodesulfovibrio</taxon>
    </lineage>
</organism>
<protein>
    <recommendedName>
        <fullName evidence="1">Small ribosomal subunit protein uS14</fullName>
    </recommendedName>
    <alternativeName>
        <fullName evidence="2">30S ribosomal protein S14 type Z</fullName>
    </alternativeName>
</protein>
<keyword id="KW-0479">Metal-binding</keyword>
<keyword id="KW-1185">Reference proteome</keyword>
<keyword id="KW-0687">Ribonucleoprotein</keyword>
<keyword id="KW-0689">Ribosomal protein</keyword>
<keyword id="KW-0694">RNA-binding</keyword>
<keyword id="KW-0699">rRNA-binding</keyword>
<keyword id="KW-0862">Zinc</keyword>
<gene>
    <name evidence="1" type="primary">rpsZ</name>
    <name evidence="1" type="synonym">rpsN</name>
    <name type="ordered locus">THEYE_A1433</name>
</gene>
<proteinExistence type="inferred from homology"/>
<sequence>MARKSKIERAKYPAKFKVRVRNRCKMCGRSRGYLRDFGLCRICFRFLANSGKIPGVVKASW</sequence>
<evidence type="ECO:0000255" key="1">
    <source>
        <dbReference type="HAMAP-Rule" id="MF_01364"/>
    </source>
</evidence>
<evidence type="ECO:0000305" key="2"/>
<dbReference type="EMBL" id="CP001147">
    <property type="protein sequence ID" value="ACI20924.1"/>
    <property type="molecule type" value="Genomic_DNA"/>
</dbReference>
<dbReference type="RefSeq" id="WP_012545654.1">
    <property type="nucleotide sequence ID" value="NC_011296.1"/>
</dbReference>
<dbReference type="RefSeq" id="YP_002249232.1">
    <property type="nucleotide sequence ID" value="NC_011296.1"/>
</dbReference>
<dbReference type="SMR" id="B5YG34"/>
<dbReference type="STRING" id="289376.THEYE_A1433"/>
<dbReference type="EnsemblBacteria" id="ACI20924">
    <property type="protein sequence ID" value="ACI20924"/>
    <property type="gene ID" value="THEYE_A1433"/>
</dbReference>
<dbReference type="KEGG" id="tye:THEYE_A1433"/>
<dbReference type="PATRIC" id="fig|289376.4.peg.1394"/>
<dbReference type="eggNOG" id="COG0199">
    <property type="taxonomic scope" value="Bacteria"/>
</dbReference>
<dbReference type="HOGENOM" id="CLU_139869_3_0_0"/>
<dbReference type="InParanoid" id="B5YG34"/>
<dbReference type="OrthoDB" id="9810484at2"/>
<dbReference type="Proteomes" id="UP000000718">
    <property type="component" value="Chromosome"/>
</dbReference>
<dbReference type="GO" id="GO:0005737">
    <property type="term" value="C:cytoplasm"/>
    <property type="evidence" value="ECO:0007669"/>
    <property type="project" value="UniProtKB-ARBA"/>
</dbReference>
<dbReference type="GO" id="GO:0015935">
    <property type="term" value="C:small ribosomal subunit"/>
    <property type="evidence" value="ECO:0000318"/>
    <property type="project" value="GO_Central"/>
</dbReference>
<dbReference type="GO" id="GO:0019843">
    <property type="term" value="F:rRNA binding"/>
    <property type="evidence" value="ECO:0007669"/>
    <property type="project" value="UniProtKB-UniRule"/>
</dbReference>
<dbReference type="GO" id="GO:0003735">
    <property type="term" value="F:structural constituent of ribosome"/>
    <property type="evidence" value="ECO:0000318"/>
    <property type="project" value="GO_Central"/>
</dbReference>
<dbReference type="GO" id="GO:0008270">
    <property type="term" value="F:zinc ion binding"/>
    <property type="evidence" value="ECO:0007669"/>
    <property type="project" value="UniProtKB-UniRule"/>
</dbReference>
<dbReference type="GO" id="GO:0006412">
    <property type="term" value="P:translation"/>
    <property type="evidence" value="ECO:0000318"/>
    <property type="project" value="GO_Central"/>
</dbReference>
<dbReference type="FunFam" id="4.10.830.10:FF:000001">
    <property type="entry name" value="30S ribosomal protein S14 type Z"/>
    <property type="match status" value="1"/>
</dbReference>
<dbReference type="Gene3D" id="4.10.830.10">
    <property type="entry name" value="30s Ribosomal Protein S14, Chain N"/>
    <property type="match status" value="1"/>
</dbReference>
<dbReference type="HAMAP" id="MF_01364_B">
    <property type="entry name" value="Ribosomal_uS14_2_B"/>
    <property type="match status" value="1"/>
</dbReference>
<dbReference type="InterPro" id="IPR001209">
    <property type="entry name" value="Ribosomal_uS14"/>
</dbReference>
<dbReference type="InterPro" id="IPR023053">
    <property type="entry name" value="Ribosomal_uS14_bact"/>
</dbReference>
<dbReference type="InterPro" id="IPR018271">
    <property type="entry name" value="Ribosomal_uS14_CS"/>
</dbReference>
<dbReference type="InterPro" id="IPR043140">
    <property type="entry name" value="Ribosomal_uS14_sf"/>
</dbReference>
<dbReference type="NCBIfam" id="NF005974">
    <property type="entry name" value="PRK08061.1"/>
    <property type="match status" value="1"/>
</dbReference>
<dbReference type="PANTHER" id="PTHR19836">
    <property type="entry name" value="30S RIBOSOMAL PROTEIN S14"/>
    <property type="match status" value="1"/>
</dbReference>
<dbReference type="PANTHER" id="PTHR19836:SF19">
    <property type="entry name" value="SMALL RIBOSOMAL SUBUNIT PROTEIN US14M"/>
    <property type="match status" value="1"/>
</dbReference>
<dbReference type="Pfam" id="PF00253">
    <property type="entry name" value="Ribosomal_S14"/>
    <property type="match status" value="1"/>
</dbReference>
<dbReference type="SUPFAM" id="SSF57716">
    <property type="entry name" value="Glucocorticoid receptor-like (DNA-binding domain)"/>
    <property type="match status" value="1"/>
</dbReference>
<dbReference type="PROSITE" id="PS00527">
    <property type="entry name" value="RIBOSOMAL_S14"/>
    <property type="match status" value="1"/>
</dbReference>